<name>YBHS_ECO57</name>
<gene>
    <name type="primary">ybhS</name>
    <name type="ordered locus">Z1013</name>
    <name type="ordered locus">ECs0871</name>
</gene>
<evidence type="ECO:0000250" key="1">
    <source>
        <dbReference type="UniProtKB" id="P0AFQ2"/>
    </source>
</evidence>
<evidence type="ECO:0000255" key="2"/>
<evidence type="ECO:0000255" key="3">
    <source>
        <dbReference type="PROSITE-ProRule" id="PRU00442"/>
    </source>
</evidence>
<evidence type="ECO:0000305" key="4"/>
<dbReference type="EMBL" id="AE005174">
    <property type="protein sequence ID" value="AAG55164.1"/>
    <property type="molecule type" value="Genomic_DNA"/>
</dbReference>
<dbReference type="EMBL" id="BA000007">
    <property type="protein sequence ID" value="BAB34294.1"/>
    <property type="molecule type" value="Genomic_DNA"/>
</dbReference>
<dbReference type="PIR" id="G90737">
    <property type="entry name" value="G90737"/>
</dbReference>
<dbReference type="PIR" id="H85587">
    <property type="entry name" value="H85587"/>
</dbReference>
<dbReference type="RefSeq" id="NP_308898.1">
    <property type="nucleotide sequence ID" value="NC_002695.1"/>
</dbReference>
<dbReference type="RefSeq" id="WP_000070131.1">
    <property type="nucleotide sequence ID" value="NZ_VOAI01000006.1"/>
</dbReference>
<dbReference type="SMR" id="P0AFQ4"/>
<dbReference type="STRING" id="155864.Z1013"/>
<dbReference type="GeneID" id="917608"/>
<dbReference type="KEGG" id="ece:Z1013"/>
<dbReference type="KEGG" id="ecs:ECs_0871"/>
<dbReference type="PATRIC" id="fig|386585.9.peg.985"/>
<dbReference type="eggNOG" id="COG0842">
    <property type="taxonomic scope" value="Bacteria"/>
</dbReference>
<dbReference type="HOGENOM" id="CLU_039483_8_3_6"/>
<dbReference type="OMA" id="CAMMTSI"/>
<dbReference type="Proteomes" id="UP000000558">
    <property type="component" value="Chromosome"/>
</dbReference>
<dbReference type="Proteomes" id="UP000002519">
    <property type="component" value="Chromosome"/>
</dbReference>
<dbReference type="GO" id="GO:0005886">
    <property type="term" value="C:plasma membrane"/>
    <property type="evidence" value="ECO:0007669"/>
    <property type="project" value="UniProtKB-SubCell"/>
</dbReference>
<dbReference type="GO" id="GO:0140359">
    <property type="term" value="F:ABC-type transporter activity"/>
    <property type="evidence" value="ECO:0007669"/>
    <property type="project" value="InterPro"/>
</dbReference>
<dbReference type="FunFam" id="3.40.1710.10:FF:000001">
    <property type="entry name" value="Inner membrane transport permease ybhS"/>
    <property type="match status" value="1"/>
</dbReference>
<dbReference type="Gene3D" id="3.40.1710.10">
    <property type="entry name" value="abc type-2 transporter like domain"/>
    <property type="match status" value="1"/>
</dbReference>
<dbReference type="InterPro" id="IPR051449">
    <property type="entry name" value="ABC-2_transporter_component"/>
</dbReference>
<dbReference type="InterPro" id="IPR013525">
    <property type="entry name" value="ABC2_TM"/>
</dbReference>
<dbReference type="InterPro" id="IPR047817">
    <property type="entry name" value="ABC2_TM_bact-type"/>
</dbReference>
<dbReference type="PANTHER" id="PTHR30294">
    <property type="entry name" value="MEMBRANE COMPONENT OF ABC TRANSPORTER YHHJ-RELATED"/>
    <property type="match status" value="1"/>
</dbReference>
<dbReference type="PANTHER" id="PTHR30294:SF29">
    <property type="entry name" value="MULTIDRUG ABC TRANSPORTER PERMEASE YBHS-RELATED"/>
    <property type="match status" value="1"/>
</dbReference>
<dbReference type="Pfam" id="PF12698">
    <property type="entry name" value="ABC2_membrane_3"/>
    <property type="match status" value="1"/>
</dbReference>
<dbReference type="PROSITE" id="PS51012">
    <property type="entry name" value="ABC_TM2"/>
    <property type="match status" value="1"/>
</dbReference>
<protein>
    <recommendedName>
        <fullName evidence="1">Probable multidrug ABC transporter permease YbhS</fullName>
    </recommendedName>
</protein>
<feature type="chain" id="PRO_0000183006" description="Probable multidrug ABC transporter permease YbhS">
    <location>
        <begin position="1"/>
        <end position="377"/>
    </location>
</feature>
<feature type="topological domain" description="Cytoplasmic" evidence="4">
    <location>
        <begin position="1"/>
        <end position="28"/>
    </location>
</feature>
<feature type="transmembrane region" description="Helical" evidence="2">
    <location>
        <begin position="29"/>
        <end position="49"/>
    </location>
</feature>
<feature type="topological domain" description="Periplasmic" evidence="4">
    <location>
        <begin position="50"/>
        <end position="181"/>
    </location>
</feature>
<feature type="transmembrane region" description="Helical" evidence="2">
    <location>
        <begin position="182"/>
        <end position="202"/>
    </location>
</feature>
<feature type="topological domain" description="Cytoplasmic" evidence="4">
    <location>
        <begin position="203"/>
        <end position="234"/>
    </location>
</feature>
<feature type="transmembrane region" description="Helical" evidence="2">
    <location>
        <begin position="235"/>
        <end position="255"/>
    </location>
</feature>
<feature type="topological domain" description="Periplasmic" evidence="4">
    <location>
        <begin position="256"/>
        <end position="261"/>
    </location>
</feature>
<feature type="transmembrane region" description="Helical" evidence="2">
    <location>
        <begin position="262"/>
        <end position="282"/>
    </location>
</feature>
<feature type="topological domain" description="Cytoplasmic" evidence="4">
    <location>
        <begin position="283"/>
        <end position="291"/>
    </location>
</feature>
<feature type="transmembrane region" description="Helical" evidence="2">
    <location>
        <begin position="292"/>
        <end position="312"/>
    </location>
</feature>
<feature type="topological domain" description="Periplasmic" evidence="4">
    <location>
        <begin position="313"/>
        <end position="345"/>
    </location>
</feature>
<feature type="transmembrane region" description="Helical" evidence="2">
    <location>
        <begin position="346"/>
        <end position="366"/>
    </location>
</feature>
<feature type="topological domain" description="Cytoplasmic" evidence="1">
    <location>
        <begin position="367"/>
        <end position="377"/>
    </location>
</feature>
<feature type="domain" description="ABC transmembrane type-2" evidence="3">
    <location>
        <begin position="145"/>
        <end position="375"/>
    </location>
</feature>
<accession>P0AFQ4</accession>
<accession>P75775</accession>
<sequence>MSNPILSWRRVRALCVKETRQIVRDPSSWLIAVVIPLLLLFIFGYGINLDSSKLRVGILLEQRSEAALDFTHTMTGSPYIDATISDNRQELIAKMQAGKIRGLVVIPVDFAEQMERANATAPIQVITDGSEPNTANFVQGYVEGIWQIWQMQRAEDNGQTFEPLIDVQTRYWFNPAAISQHFIIPGAVTIIMTVIGAILTSLVVAREWERGTMEALLSTEITRTELLLCKLIPYYFLGMLAMLLCMLVSVFILGVPYRGSLLILFFISSLFLLSTLGMGLLISTITRNQFNAAQVALNAAFLPSIMLSGFIFQIDSMPAVIRAVTYIIPARYFVSTLQSLFLAGNIPVVLVVNVLFLIASAVMFIGLTWLKTKRRLD</sequence>
<keyword id="KW-0997">Cell inner membrane</keyword>
<keyword id="KW-1003">Cell membrane</keyword>
<keyword id="KW-0472">Membrane</keyword>
<keyword id="KW-1185">Reference proteome</keyword>
<keyword id="KW-0812">Transmembrane</keyword>
<keyword id="KW-1133">Transmembrane helix</keyword>
<keyword id="KW-0813">Transport</keyword>
<comment type="function">
    <text evidence="1">Part of the ABC transporter complex YbhFSR that could be involved in efflux of cefoperazone. Probably involved in the translocation of the substrate across the membrane.</text>
</comment>
<comment type="subunit">
    <text evidence="1">The complex is probably composed of two ATP-binding proteins (YbhF) and two transmembrane proteins (YbhR and YbhS).</text>
</comment>
<comment type="subcellular location">
    <subcellularLocation>
        <location evidence="1">Cell inner membrane</location>
        <topology evidence="2">Multi-pass membrane protein</topology>
    </subcellularLocation>
</comment>
<comment type="similarity">
    <text evidence="4">Belongs to the ABC-2 integral membrane protein family.</text>
</comment>
<proteinExistence type="inferred from homology"/>
<reference key="1">
    <citation type="journal article" date="2001" name="Nature">
        <title>Genome sequence of enterohaemorrhagic Escherichia coli O157:H7.</title>
        <authorList>
            <person name="Perna N.T."/>
            <person name="Plunkett G. III"/>
            <person name="Burland V."/>
            <person name="Mau B."/>
            <person name="Glasner J.D."/>
            <person name="Rose D.J."/>
            <person name="Mayhew G.F."/>
            <person name="Evans P.S."/>
            <person name="Gregor J."/>
            <person name="Kirkpatrick H.A."/>
            <person name="Posfai G."/>
            <person name="Hackett J."/>
            <person name="Klink S."/>
            <person name="Boutin A."/>
            <person name="Shao Y."/>
            <person name="Miller L."/>
            <person name="Grotbeck E.J."/>
            <person name="Davis N.W."/>
            <person name="Lim A."/>
            <person name="Dimalanta E.T."/>
            <person name="Potamousis K."/>
            <person name="Apodaca J."/>
            <person name="Anantharaman T.S."/>
            <person name="Lin J."/>
            <person name="Yen G."/>
            <person name="Schwartz D.C."/>
            <person name="Welch R.A."/>
            <person name="Blattner F.R."/>
        </authorList>
    </citation>
    <scope>NUCLEOTIDE SEQUENCE [LARGE SCALE GENOMIC DNA]</scope>
    <source>
        <strain>O157:H7 / EDL933 / ATCC 700927 / EHEC</strain>
    </source>
</reference>
<reference key="2">
    <citation type="journal article" date="2001" name="DNA Res.">
        <title>Complete genome sequence of enterohemorrhagic Escherichia coli O157:H7 and genomic comparison with a laboratory strain K-12.</title>
        <authorList>
            <person name="Hayashi T."/>
            <person name="Makino K."/>
            <person name="Ohnishi M."/>
            <person name="Kurokawa K."/>
            <person name="Ishii K."/>
            <person name="Yokoyama K."/>
            <person name="Han C.-G."/>
            <person name="Ohtsubo E."/>
            <person name="Nakayama K."/>
            <person name="Murata T."/>
            <person name="Tanaka M."/>
            <person name="Tobe T."/>
            <person name="Iida T."/>
            <person name="Takami H."/>
            <person name="Honda T."/>
            <person name="Sasakawa C."/>
            <person name="Ogasawara N."/>
            <person name="Yasunaga T."/>
            <person name="Kuhara S."/>
            <person name="Shiba T."/>
            <person name="Hattori M."/>
            <person name="Shinagawa H."/>
        </authorList>
    </citation>
    <scope>NUCLEOTIDE SEQUENCE [LARGE SCALE GENOMIC DNA]</scope>
    <source>
        <strain>O157:H7 / Sakai / RIMD 0509952 / EHEC</strain>
    </source>
</reference>
<organism>
    <name type="scientific">Escherichia coli O157:H7</name>
    <dbReference type="NCBI Taxonomy" id="83334"/>
    <lineage>
        <taxon>Bacteria</taxon>
        <taxon>Pseudomonadati</taxon>
        <taxon>Pseudomonadota</taxon>
        <taxon>Gammaproteobacteria</taxon>
        <taxon>Enterobacterales</taxon>
        <taxon>Enterobacteriaceae</taxon>
        <taxon>Escherichia</taxon>
    </lineage>
</organism>